<keyword id="KW-0938">Abscisic acid signaling pathway</keyword>
<keyword id="KW-0175">Coiled coil</keyword>
<keyword id="KW-0507">mRNA processing</keyword>
<keyword id="KW-0508">mRNA splicing</keyword>
<keyword id="KW-0539">Nucleus</keyword>
<keyword id="KW-0597">Phosphoprotein</keyword>
<keyword id="KW-1185">Reference proteome</keyword>
<keyword id="KW-0694">RNA-binding</keyword>
<dbReference type="EMBL" id="AC004473">
    <property type="protein sequence ID" value="AAC24053.1"/>
    <property type="status" value="ALT_SEQ"/>
    <property type="molecule type" value="Genomic_DNA"/>
</dbReference>
<dbReference type="EMBL" id="AC004473">
    <property type="protein sequence ID" value="AAC24054.1"/>
    <property type="status" value="ALT_SEQ"/>
    <property type="molecule type" value="Genomic_DNA"/>
</dbReference>
<dbReference type="EMBL" id="CP002684">
    <property type="protein sequence ID" value="AEE33666.1"/>
    <property type="molecule type" value="Genomic_DNA"/>
</dbReference>
<dbReference type="EMBL" id="AY074284">
    <property type="protein sequence ID" value="AAL66981.1"/>
    <property type="molecule type" value="mRNA"/>
</dbReference>
<dbReference type="EMBL" id="BT001972">
    <property type="protein sequence ID" value="AAN71971.1"/>
    <property type="molecule type" value="mRNA"/>
</dbReference>
<dbReference type="EMBL" id="AK316703">
    <property type="protein sequence ID" value="BAH19430.1"/>
    <property type="molecule type" value="mRNA"/>
</dbReference>
<dbReference type="PIR" id="T02272">
    <property type="entry name" value="T02272"/>
</dbReference>
<dbReference type="PIR" id="T02273">
    <property type="entry name" value="T02273"/>
</dbReference>
<dbReference type="RefSeq" id="NP_176226.3">
    <property type="nucleotide sequence ID" value="NM_104710.5"/>
</dbReference>
<dbReference type="SMR" id="Q8VY15"/>
<dbReference type="FunCoup" id="Q8VY15">
    <property type="interactions" value="4081"/>
</dbReference>
<dbReference type="STRING" id="3702.Q8VY15"/>
<dbReference type="iPTMnet" id="Q8VY15"/>
<dbReference type="PaxDb" id="3702-AT1G60200.1"/>
<dbReference type="ProteomicsDB" id="174718"/>
<dbReference type="EnsemblPlants" id="AT1G60200.1">
    <property type="protein sequence ID" value="AT1G60200.1"/>
    <property type="gene ID" value="AT1G60200"/>
</dbReference>
<dbReference type="GeneID" id="842315"/>
<dbReference type="Gramene" id="AT1G60200.1">
    <property type="protein sequence ID" value="AT1G60200.1"/>
    <property type="gene ID" value="AT1G60200"/>
</dbReference>
<dbReference type="KEGG" id="ath:AT1G60200"/>
<dbReference type="Araport" id="AT1G60200"/>
<dbReference type="TAIR" id="AT1G60200">
    <property type="gene designation" value="RBM25"/>
</dbReference>
<dbReference type="eggNOG" id="KOG2253">
    <property type="taxonomic scope" value="Eukaryota"/>
</dbReference>
<dbReference type="HOGENOM" id="CLU_007747_0_0_1"/>
<dbReference type="InParanoid" id="Q8VY15"/>
<dbReference type="PhylomeDB" id="Q8VY15"/>
<dbReference type="CD-CODE" id="4299E36E">
    <property type="entry name" value="Nucleolus"/>
</dbReference>
<dbReference type="PRO" id="PR:Q8VY15"/>
<dbReference type="Proteomes" id="UP000006548">
    <property type="component" value="Chromosome 1"/>
</dbReference>
<dbReference type="ExpressionAtlas" id="Q8VY15">
    <property type="expression patterns" value="baseline and differential"/>
</dbReference>
<dbReference type="GO" id="GO:0005634">
    <property type="term" value="C:nucleus"/>
    <property type="evidence" value="ECO:0000314"/>
    <property type="project" value="UniProtKB"/>
</dbReference>
<dbReference type="GO" id="GO:0003723">
    <property type="term" value="F:RNA binding"/>
    <property type="evidence" value="ECO:0007669"/>
    <property type="project" value="UniProtKB-KW"/>
</dbReference>
<dbReference type="GO" id="GO:0009738">
    <property type="term" value="P:abscisic acid-activated signaling pathway"/>
    <property type="evidence" value="ECO:0007669"/>
    <property type="project" value="UniProtKB-KW"/>
</dbReference>
<dbReference type="GO" id="GO:0006397">
    <property type="term" value="P:mRNA processing"/>
    <property type="evidence" value="ECO:0000314"/>
    <property type="project" value="UniProtKB"/>
</dbReference>
<dbReference type="GO" id="GO:0048024">
    <property type="term" value="P:regulation of mRNA splicing, via spliceosome"/>
    <property type="evidence" value="ECO:0000315"/>
    <property type="project" value="UniProtKB"/>
</dbReference>
<dbReference type="GO" id="GO:0009737">
    <property type="term" value="P:response to abscisic acid"/>
    <property type="evidence" value="ECO:0000315"/>
    <property type="project" value="UniProtKB"/>
</dbReference>
<dbReference type="GO" id="GO:0009414">
    <property type="term" value="P:response to water deprivation"/>
    <property type="evidence" value="ECO:0000315"/>
    <property type="project" value="TAIR"/>
</dbReference>
<dbReference type="GO" id="GO:0008380">
    <property type="term" value="P:RNA splicing"/>
    <property type="evidence" value="ECO:0007669"/>
    <property type="project" value="UniProtKB-KW"/>
</dbReference>
<dbReference type="CDD" id="cd12446">
    <property type="entry name" value="RRM_RBM25"/>
    <property type="match status" value="1"/>
</dbReference>
<dbReference type="FunFam" id="1.20.1390.10:FF:000008">
    <property type="entry name" value="RNA Binding Motif protein homolog"/>
    <property type="match status" value="1"/>
</dbReference>
<dbReference type="Gene3D" id="3.30.70.330">
    <property type="match status" value="1"/>
</dbReference>
<dbReference type="Gene3D" id="1.20.1390.10">
    <property type="entry name" value="PWI domain"/>
    <property type="match status" value="1"/>
</dbReference>
<dbReference type="InterPro" id="IPR012677">
    <property type="entry name" value="Nucleotide-bd_a/b_plait_sf"/>
</dbReference>
<dbReference type="InterPro" id="IPR002483">
    <property type="entry name" value="PWI_dom"/>
</dbReference>
<dbReference type="InterPro" id="IPR036483">
    <property type="entry name" value="PWI_dom_sf"/>
</dbReference>
<dbReference type="InterPro" id="IPR035979">
    <property type="entry name" value="RBD_domain_sf"/>
</dbReference>
<dbReference type="InterPro" id="IPR034268">
    <property type="entry name" value="RBM25_RRM"/>
</dbReference>
<dbReference type="InterPro" id="IPR053294">
    <property type="entry name" value="RBM_PWI_domain"/>
</dbReference>
<dbReference type="InterPro" id="IPR000504">
    <property type="entry name" value="RRM_dom"/>
</dbReference>
<dbReference type="PANTHER" id="PTHR47334:SF2">
    <property type="entry name" value="RNA-BINDING MOTIF PROTEIN 25"/>
    <property type="match status" value="1"/>
</dbReference>
<dbReference type="PANTHER" id="PTHR47334">
    <property type="entry name" value="SPLICING FACTOR PWI DOMAIN-CONTAINING PROTEIN / RNA RECOGNITION MOTIF (RRM)-CONTAINING PROTEIN"/>
    <property type="match status" value="1"/>
</dbReference>
<dbReference type="Pfam" id="PF01480">
    <property type="entry name" value="PWI"/>
    <property type="match status" value="1"/>
</dbReference>
<dbReference type="Pfam" id="PF00076">
    <property type="entry name" value="RRM_1"/>
    <property type="match status" value="1"/>
</dbReference>
<dbReference type="SMART" id="SM00311">
    <property type="entry name" value="PWI"/>
    <property type="match status" value="1"/>
</dbReference>
<dbReference type="SMART" id="SM00360">
    <property type="entry name" value="RRM"/>
    <property type="match status" value="1"/>
</dbReference>
<dbReference type="SUPFAM" id="SSF101233">
    <property type="entry name" value="PWI domain"/>
    <property type="match status" value="1"/>
</dbReference>
<dbReference type="SUPFAM" id="SSF54928">
    <property type="entry name" value="RNA-binding domain, RBD"/>
    <property type="match status" value="1"/>
</dbReference>
<dbReference type="PROSITE" id="PS51025">
    <property type="entry name" value="PWI"/>
    <property type="match status" value="1"/>
</dbReference>
<dbReference type="PROSITE" id="PS50102">
    <property type="entry name" value="RRM"/>
    <property type="match status" value="1"/>
</dbReference>
<gene>
    <name evidence="9" type="primary">RBM25</name>
    <name evidence="11" type="ordered locus">At1g60200</name>
    <name evidence="12" type="ORF">T13D8.10</name>
    <name evidence="13" type="ORF">T13D8.9</name>
</gene>
<sequence>MADESSSPATGDPNSQKPESTTPISIPNPNPNPSLTPPPPQQHSQPPVAPLVPPGPPYAPPAQIPSSLLPTNLPPPPPFRPGMQFTPVANFQNPSSGVPPPGSMPQYQPQPGMRPFQPMANGYPGIHGVAPPGAMPPHGLLRYPSPYPTMVRPGFIMRPPGTIGAVQLAPRPLIPGMPGLRPVMPPMVRPASLPFVTPAEKPQTTIYIGKIATVENDFMMSILEFCGHVKSCLRAEDPTTKKPKGFGFYEFESAEGILRAIRLLTQRTIDGQELLVNVNQATKEYLLKYVEKKIETAKKAKESQGTKENQAEGPESEQDKLESADNETGKDGESKIKENIDIANSAVLTDEEREADREAMEKIETAIEERLKSNPLPPPPPPPADGSGMEFAFKSKDGDSNTDVARSDAAANDVETSGEHNRPDTSSPDWSKRNDRRSRERGEKEQEMDRYEREAERERSRKEREQRRKLEDAERAYQTRLRQWERREREKEKERQYEKEKEKEKERKRKKEIRYEEEEEEDDDDSRRRWHRAALDERRRRQLREKEDDLADRLKEEEEVAEAKRSAEEQNLQQQQLDALRILSGQAAIGSETVQTSPIENDHKATLQTVGESANEHHAADFEENGSGNESMAIDNNSGSEAHAPSKKLGFGLVGSGKRTSVPSVFYEEDEDEARKAKKMKPLVPIDYSTEEQEAVAHGGSGNTPPHLALAAEFAKRISSTNPKEETIETEKQRSRRSHDKASHRDRERERERDRDRDRVRDRGDGHSGPTKDAKESGKAKIIDTKFLDAKQLIDTIPKTKEDLFSYEINWAMYDKHQVHERMRPWISKKIMEFLGEEEATLVDFIVSNTQQHVQASQMLELLQSILDEEAEMFVLKMWRMLIFEIKRVEAGVPVKSKA</sequence>
<proteinExistence type="evidence at protein level"/>
<feature type="chain" id="PRO_0000454943" description="RNA-binding motif protein 25">
    <location>
        <begin position="1"/>
        <end position="899"/>
    </location>
</feature>
<feature type="domain" description="RRM" evidence="3">
    <location>
        <begin position="204"/>
        <end position="281"/>
    </location>
</feature>
<feature type="domain" description="PWI" evidence="4">
    <location>
        <begin position="802"/>
        <end position="899"/>
    </location>
</feature>
<feature type="region of interest" description="Disordered" evidence="6">
    <location>
        <begin position="1"/>
        <end position="112"/>
    </location>
</feature>
<feature type="region of interest" description="Disordered" evidence="6">
    <location>
        <begin position="298"/>
        <end position="572"/>
    </location>
</feature>
<feature type="region of interest" description="Disordered" evidence="6">
    <location>
        <begin position="611"/>
        <end position="778"/>
    </location>
</feature>
<feature type="coiled-coil region" evidence="2">
    <location>
        <begin position="434"/>
        <end position="578"/>
    </location>
</feature>
<feature type="short sequence motif" description="Nuclear localization signal 1" evidence="5">
    <location>
        <begin position="526"/>
        <end position="533"/>
    </location>
</feature>
<feature type="short sequence motif" description="Nuclear localization signal 2" evidence="5">
    <location>
        <begin position="735"/>
        <end position="742"/>
    </location>
</feature>
<feature type="compositionally biased region" description="Polar residues" evidence="6">
    <location>
        <begin position="1"/>
        <end position="20"/>
    </location>
</feature>
<feature type="compositionally biased region" description="Pro residues" evidence="6">
    <location>
        <begin position="26"/>
        <end position="63"/>
    </location>
</feature>
<feature type="compositionally biased region" description="Basic and acidic residues" evidence="6">
    <location>
        <begin position="317"/>
        <end position="340"/>
    </location>
</feature>
<feature type="compositionally biased region" description="Basic and acidic residues" evidence="6">
    <location>
        <begin position="354"/>
        <end position="372"/>
    </location>
</feature>
<feature type="compositionally biased region" description="Pro residues" evidence="6">
    <location>
        <begin position="375"/>
        <end position="384"/>
    </location>
</feature>
<feature type="compositionally biased region" description="Basic and acidic residues" evidence="6">
    <location>
        <begin position="430"/>
        <end position="505"/>
    </location>
</feature>
<feature type="compositionally biased region" description="Acidic residues" evidence="6">
    <location>
        <begin position="515"/>
        <end position="524"/>
    </location>
</feature>
<feature type="compositionally biased region" description="Basic and acidic residues" evidence="6">
    <location>
        <begin position="533"/>
        <end position="568"/>
    </location>
</feature>
<feature type="compositionally biased region" description="Polar residues" evidence="6">
    <location>
        <begin position="626"/>
        <end position="640"/>
    </location>
</feature>
<feature type="compositionally biased region" description="Basic and acidic residues" evidence="6">
    <location>
        <begin position="723"/>
        <end position="733"/>
    </location>
</feature>
<feature type="compositionally biased region" description="Basic and acidic residues" evidence="6">
    <location>
        <begin position="740"/>
        <end position="778"/>
    </location>
</feature>
<accession>Q8VY15</accession>
<accession>B9DFB3</accession>
<accession>O80743</accession>
<accession>O80744</accession>
<comment type="function">
    <text evidence="7 8">RNA-binding protein that acts as a regulator of alternative pre-mRNA splicing (PubMed:26404089, PubMed:28971960). Negative regulator of responses to abscisic acid (ABA), including in early development (PubMed:26404089).</text>
</comment>
<comment type="subunit">
    <text evidence="1">Specifically associates with functional splicing complexes (By similarity). Associates with exon junction complex (EJC) proteins (By similarity).</text>
</comment>
<comment type="subcellular location">
    <subcellularLocation>
        <location evidence="4 5 7">Nucleus</location>
    </subcellularLocation>
</comment>
<comment type="induction">
    <text evidence="7">Induced by abscisic acid both at transcriptional and at post-translational (pre-mRNA splicing) levels.</text>
</comment>
<comment type="domain">
    <text evidence="1">The PWI domain binds nucleic acids with significant help from its N-terminal flanking basic region. It has an equal preference for binding to single- or double-stranded species, and it contributes to RBM25 role in modulation of alternative splicing.</text>
</comment>
<comment type="PTM">
    <text evidence="7">Phosphorylated; the phosphorylation level is repressed by abscisic acid (ABA).</text>
</comment>
<comment type="disruption phenotype">
    <text evidence="7 8">Increased sensitivity to growth inhibition by abscisic acid (ABA) (PubMed:26404089). Altered transcript accumulation profiles due to impaired pre-messenger RNA (pre-mRNA) splicing (e.g. HAB1 transcripts alternative splicing) (PubMed:26404089, PubMed:28971960). These phenotypes are partially suppressed by an ectopic expression of HAB1 (PubMed:26404089).</text>
</comment>
<comment type="sequence caution" evidence="10">
    <conflict type="erroneous gene model prediction">
        <sequence resource="EMBL-CDS" id="AAC24053"/>
    </conflict>
</comment>
<comment type="sequence caution" evidence="10">
    <conflict type="erroneous gene model prediction">
        <sequence resource="EMBL-CDS" id="AAC24054"/>
    </conflict>
</comment>
<protein>
    <recommendedName>
        <fullName evidence="9">RNA-binding motif protein 25</fullName>
    </recommendedName>
</protein>
<name>RBM25_ARATH</name>
<organism>
    <name type="scientific">Arabidopsis thaliana</name>
    <name type="common">Mouse-ear cress</name>
    <dbReference type="NCBI Taxonomy" id="3702"/>
    <lineage>
        <taxon>Eukaryota</taxon>
        <taxon>Viridiplantae</taxon>
        <taxon>Streptophyta</taxon>
        <taxon>Embryophyta</taxon>
        <taxon>Tracheophyta</taxon>
        <taxon>Spermatophyta</taxon>
        <taxon>Magnoliopsida</taxon>
        <taxon>eudicotyledons</taxon>
        <taxon>Gunneridae</taxon>
        <taxon>Pentapetalae</taxon>
        <taxon>rosids</taxon>
        <taxon>malvids</taxon>
        <taxon>Brassicales</taxon>
        <taxon>Brassicaceae</taxon>
        <taxon>Camelineae</taxon>
        <taxon>Arabidopsis</taxon>
    </lineage>
</organism>
<evidence type="ECO:0000250" key="1">
    <source>
        <dbReference type="UniProtKB" id="P49756"/>
    </source>
</evidence>
<evidence type="ECO:0000255" key="2"/>
<evidence type="ECO:0000255" key="3">
    <source>
        <dbReference type="PROSITE-ProRule" id="PRU00176"/>
    </source>
</evidence>
<evidence type="ECO:0000255" key="4">
    <source>
        <dbReference type="PROSITE-ProRule" id="PRU00627"/>
    </source>
</evidence>
<evidence type="ECO:0000255" key="5">
    <source>
        <dbReference type="PROSITE-ProRule" id="PRU00768"/>
    </source>
</evidence>
<evidence type="ECO:0000256" key="6">
    <source>
        <dbReference type="SAM" id="MobiDB-lite"/>
    </source>
</evidence>
<evidence type="ECO:0000269" key="7">
    <source>
    </source>
</evidence>
<evidence type="ECO:0000269" key="8">
    <source>
    </source>
</evidence>
<evidence type="ECO:0000303" key="9">
    <source>
    </source>
</evidence>
<evidence type="ECO:0000305" key="10"/>
<evidence type="ECO:0000312" key="11">
    <source>
        <dbReference type="Araport" id="AT1G60200"/>
    </source>
</evidence>
<evidence type="ECO:0000312" key="12">
    <source>
        <dbReference type="EMBL" id="AAC24053.1"/>
    </source>
</evidence>
<evidence type="ECO:0000312" key="13">
    <source>
        <dbReference type="EMBL" id="AAC24054.1"/>
    </source>
</evidence>
<reference key="1">
    <citation type="journal article" date="2000" name="Nature">
        <title>Sequence and analysis of chromosome 1 of the plant Arabidopsis thaliana.</title>
        <authorList>
            <person name="Theologis A."/>
            <person name="Ecker J.R."/>
            <person name="Palm C.J."/>
            <person name="Federspiel N.A."/>
            <person name="Kaul S."/>
            <person name="White O."/>
            <person name="Alonso J."/>
            <person name="Altafi H."/>
            <person name="Araujo R."/>
            <person name="Bowman C.L."/>
            <person name="Brooks S.Y."/>
            <person name="Buehler E."/>
            <person name="Chan A."/>
            <person name="Chao Q."/>
            <person name="Chen H."/>
            <person name="Cheuk R.F."/>
            <person name="Chin C.W."/>
            <person name="Chung M.K."/>
            <person name="Conn L."/>
            <person name="Conway A.B."/>
            <person name="Conway A.R."/>
            <person name="Creasy T.H."/>
            <person name="Dewar K."/>
            <person name="Dunn P."/>
            <person name="Etgu P."/>
            <person name="Feldblyum T.V."/>
            <person name="Feng J.-D."/>
            <person name="Fong B."/>
            <person name="Fujii C.Y."/>
            <person name="Gill J.E."/>
            <person name="Goldsmith A.D."/>
            <person name="Haas B."/>
            <person name="Hansen N.F."/>
            <person name="Hughes B."/>
            <person name="Huizar L."/>
            <person name="Hunter J.L."/>
            <person name="Jenkins J."/>
            <person name="Johnson-Hopson C."/>
            <person name="Khan S."/>
            <person name="Khaykin E."/>
            <person name="Kim C.J."/>
            <person name="Koo H.L."/>
            <person name="Kremenetskaia I."/>
            <person name="Kurtz D.B."/>
            <person name="Kwan A."/>
            <person name="Lam B."/>
            <person name="Langin-Hooper S."/>
            <person name="Lee A."/>
            <person name="Lee J.M."/>
            <person name="Lenz C.A."/>
            <person name="Li J.H."/>
            <person name="Li Y.-P."/>
            <person name="Lin X."/>
            <person name="Liu S.X."/>
            <person name="Liu Z.A."/>
            <person name="Luros J.S."/>
            <person name="Maiti R."/>
            <person name="Marziali A."/>
            <person name="Militscher J."/>
            <person name="Miranda M."/>
            <person name="Nguyen M."/>
            <person name="Nierman W.C."/>
            <person name="Osborne B.I."/>
            <person name="Pai G."/>
            <person name="Peterson J."/>
            <person name="Pham P.K."/>
            <person name="Rizzo M."/>
            <person name="Rooney T."/>
            <person name="Rowley D."/>
            <person name="Sakano H."/>
            <person name="Salzberg S.L."/>
            <person name="Schwartz J.R."/>
            <person name="Shinn P."/>
            <person name="Southwick A.M."/>
            <person name="Sun H."/>
            <person name="Tallon L.J."/>
            <person name="Tambunga G."/>
            <person name="Toriumi M.J."/>
            <person name="Town C.D."/>
            <person name="Utterback T."/>
            <person name="Van Aken S."/>
            <person name="Vaysberg M."/>
            <person name="Vysotskaia V.S."/>
            <person name="Walker M."/>
            <person name="Wu D."/>
            <person name="Yu G."/>
            <person name="Fraser C.M."/>
            <person name="Venter J.C."/>
            <person name="Davis R.W."/>
        </authorList>
    </citation>
    <scope>NUCLEOTIDE SEQUENCE [LARGE SCALE GENOMIC DNA]</scope>
    <source>
        <strain>cv. Columbia</strain>
    </source>
</reference>
<reference key="2">
    <citation type="journal article" date="2017" name="Plant J.">
        <title>Araport11: a complete reannotation of the Arabidopsis thaliana reference genome.</title>
        <authorList>
            <person name="Cheng C.Y."/>
            <person name="Krishnakumar V."/>
            <person name="Chan A.P."/>
            <person name="Thibaud-Nissen F."/>
            <person name="Schobel S."/>
            <person name="Town C.D."/>
        </authorList>
    </citation>
    <scope>GENOME REANNOTATION</scope>
    <source>
        <strain>cv. Columbia</strain>
    </source>
</reference>
<reference key="3">
    <citation type="journal article" date="2003" name="Science">
        <title>Empirical analysis of transcriptional activity in the Arabidopsis genome.</title>
        <authorList>
            <person name="Yamada K."/>
            <person name="Lim J."/>
            <person name="Dale J.M."/>
            <person name="Chen H."/>
            <person name="Shinn P."/>
            <person name="Palm C.J."/>
            <person name="Southwick A.M."/>
            <person name="Wu H.C."/>
            <person name="Kim C.J."/>
            <person name="Nguyen M."/>
            <person name="Pham P.K."/>
            <person name="Cheuk R.F."/>
            <person name="Karlin-Newmann G."/>
            <person name="Liu S.X."/>
            <person name="Lam B."/>
            <person name="Sakano H."/>
            <person name="Wu T."/>
            <person name="Yu G."/>
            <person name="Miranda M."/>
            <person name="Quach H.L."/>
            <person name="Tripp M."/>
            <person name="Chang C.H."/>
            <person name="Lee J.M."/>
            <person name="Toriumi M.J."/>
            <person name="Chan M.M."/>
            <person name="Tang C.C."/>
            <person name="Onodera C.S."/>
            <person name="Deng J.M."/>
            <person name="Akiyama K."/>
            <person name="Ansari Y."/>
            <person name="Arakawa T."/>
            <person name="Banh J."/>
            <person name="Banno F."/>
            <person name="Bowser L."/>
            <person name="Brooks S.Y."/>
            <person name="Carninci P."/>
            <person name="Chao Q."/>
            <person name="Choy N."/>
            <person name="Enju A."/>
            <person name="Goldsmith A.D."/>
            <person name="Gurjal M."/>
            <person name="Hansen N.F."/>
            <person name="Hayashizaki Y."/>
            <person name="Johnson-Hopson C."/>
            <person name="Hsuan V.W."/>
            <person name="Iida K."/>
            <person name="Karnes M."/>
            <person name="Khan S."/>
            <person name="Koesema E."/>
            <person name="Ishida J."/>
            <person name="Jiang P.X."/>
            <person name="Jones T."/>
            <person name="Kawai J."/>
            <person name="Kamiya A."/>
            <person name="Meyers C."/>
            <person name="Nakajima M."/>
            <person name="Narusaka M."/>
            <person name="Seki M."/>
            <person name="Sakurai T."/>
            <person name="Satou M."/>
            <person name="Tamse R."/>
            <person name="Vaysberg M."/>
            <person name="Wallender E.K."/>
            <person name="Wong C."/>
            <person name="Yamamura Y."/>
            <person name="Yuan S."/>
            <person name="Shinozaki K."/>
            <person name="Davis R.W."/>
            <person name="Theologis A."/>
            <person name="Ecker J.R."/>
        </authorList>
    </citation>
    <scope>NUCLEOTIDE SEQUENCE [LARGE SCALE MRNA]</scope>
    <source>
        <strain>cv. Columbia</strain>
    </source>
</reference>
<reference key="4">
    <citation type="journal article" date="2009" name="DNA Res.">
        <title>Analysis of multiple occurrences of alternative splicing events in Arabidopsis thaliana using novel sequenced full-length cDNAs.</title>
        <authorList>
            <person name="Iida K."/>
            <person name="Fukami-Kobayashi K."/>
            <person name="Toyoda A."/>
            <person name="Sakaki Y."/>
            <person name="Kobayashi M."/>
            <person name="Seki M."/>
            <person name="Shinozaki K."/>
        </authorList>
    </citation>
    <scope>NUCLEOTIDE SEQUENCE [LARGE SCALE MRNA] OF 1-507</scope>
    <source>
        <strain>cv. Columbia</strain>
        <tissue>Rosette leaf</tissue>
    </source>
</reference>
<reference key="5">
    <citation type="journal article" date="2009" name="Plant Physiol.">
        <title>Large-scale Arabidopsis phosphoproteome profiling reveals novel chloroplast kinase substrates and phosphorylation networks.</title>
        <authorList>
            <person name="Reiland S."/>
            <person name="Messerli G."/>
            <person name="Baerenfaller K."/>
            <person name="Gerrits B."/>
            <person name="Endler A."/>
            <person name="Grossmann J."/>
            <person name="Gruissem W."/>
            <person name="Baginsky S."/>
        </authorList>
    </citation>
    <scope>IDENTIFICATION BY MASS SPECTROMETRY [LARGE SCALE ANALYSIS]</scope>
</reference>
<reference key="6">
    <citation type="journal article" date="2015" name="Nat. Commun.">
        <title>An Arabidopsis PWI and RRM motif-containing protein is critical for pre-mRNA splicing and ABA responses.</title>
        <authorList>
            <person name="Zhan X."/>
            <person name="Qian B."/>
            <person name="Cao F."/>
            <person name="Wu W."/>
            <person name="Yang L."/>
            <person name="Guan Q."/>
            <person name="Gu X."/>
            <person name="Wang P."/>
            <person name="Okusolubo T.A."/>
            <person name="Dunn S.L."/>
            <person name="Zhu J.-K."/>
            <person name="Zhu J."/>
        </authorList>
    </citation>
    <scope>FUNCTION</scope>
    <scope>DISRUPTION PHENOTYPE</scope>
    <scope>SUBCELLULAR LOCATION</scope>
    <scope>INDUCTION BY ABSCISIC ACID</scope>
    <scope>PHOSPHORYLATION</scope>
    <source>
        <strain>cv. Columbia</strain>
        <strain>cv. Landsberg erecta</strain>
    </source>
</reference>
<reference key="7">
    <citation type="journal article" date="2017" name="Genetics">
        <title>A genetic screen for pre-mRNA splicing mutants of Arabidopsis thaliana identifies putative U1 snRNP components RBM25 and PRP39a.</title>
        <authorList>
            <person name="Kanno T."/>
            <person name="Lin W.-D."/>
            <person name="Fu J.L."/>
            <person name="Chang C.-L."/>
            <person name="Matzke A.J.M."/>
            <person name="Matzke M."/>
        </authorList>
    </citation>
    <scope>FUNCTION</scope>
    <scope>DISRUPTION PHENOTYPE</scope>
    <source>
        <strain>cv. Columbia</strain>
    </source>
</reference>